<feature type="chain" id="PRO_0000285073" description="C1GALT1-specific chaperone 1">
    <location>
        <begin position="1"/>
        <end position="318"/>
    </location>
</feature>
<feature type="topological domain" description="Cytoplasmic" evidence="2">
    <location>
        <begin position="1"/>
        <end position="6"/>
    </location>
</feature>
<feature type="transmembrane region" description="Helical; Signal-anchor for type II membrane protein" evidence="2">
    <location>
        <begin position="7"/>
        <end position="26"/>
    </location>
</feature>
<feature type="topological domain" description="Lumenal" evidence="2">
    <location>
        <begin position="27"/>
        <end position="318"/>
    </location>
</feature>
<proteinExistence type="evidence at transcript level"/>
<keyword id="KW-0143">Chaperone</keyword>
<keyword id="KW-0472">Membrane</keyword>
<keyword id="KW-1185">Reference proteome</keyword>
<keyword id="KW-0735">Signal-anchor</keyword>
<keyword id="KW-0812">Transmembrane</keyword>
<keyword id="KW-1133">Transmembrane helix</keyword>
<evidence type="ECO:0000250" key="1"/>
<evidence type="ECO:0000255" key="2"/>
<evidence type="ECO:0000305" key="3"/>
<protein>
    <recommendedName>
        <fullName>C1GALT1-specific chaperone 1</fullName>
    </recommendedName>
</protein>
<gene>
    <name type="primary">C1GALT1C1</name>
</gene>
<organism>
    <name type="scientific">Bos taurus</name>
    <name type="common">Bovine</name>
    <dbReference type="NCBI Taxonomy" id="9913"/>
    <lineage>
        <taxon>Eukaryota</taxon>
        <taxon>Metazoa</taxon>
        <taxon>Chordata</taxon>
        <taxon>Craniata</taxon>
        <taxon>Vertebrata</taxon>
        <taxon>Euteleostomi</taxon>
        <taxon>Mammalia</taxon>
        <taxon>Eutheria</taxon>
        <taxon>Laurasiatheria</taxon>
        <taxon>Artiodactyla</taxon>
        <taxon>Ruminantia</taxon>
        <taxon>Pecora</taxon>
        <taxon>Bovidae</taxon>
        <taxon>Bovinae</taxon>
        <taxon>Bos</taxon>
    </lineage>
</organism>
<reference key="1">
    <citation type="submission" date="2005-09" db="EMBL/GenBank/DDBJ databases">
        <authorList>
            <consortium name="NIH - Mammalian Gene Collection (MGC) project"/>
        </authorList>
    </citation>
    <scope>NUCLEOTIDE SEQUENCE [LARGE SCALE MRNA]</scope>
    <source>
        <strain>Hereford</strain>
        <tissue>Ascending colon</tissue>
    </source>
</reference>
<accession>Q3SX46</accession>
<dbReference type="EMBL" id="BC104496">
    <property type="protein sequence ID" value="AAI04497.1"/>
    <property type="molecule type" value="mRNA"/>
</dbReference>
<dbReference type="RefSeq" id="NP_001029747.1">
    <property type="nucleotide sequence ID" value="NM_001034575.1"/>
</dbReference>
<dbReference type="RefSeq" id="XP_005227521.1">
    <property type="nucleotide sequence ID" value="XM_005227464.5"/>
</dbReference>
<dbReference type="RefSeq" id="XP_015316903.1">
    <property type="nucleotide sequence ID" value="XM_015461417.1"/>
</dbReference>
<dbReference type="RefSeq" id="XP_059739442.1">
    <property type="nucleotide sequence ID" value="XM_059883459.1"/>
</dbReference>
<dbReference type="RefSeq" id="XP_059739443.1">
    <property type="nucleotide sequence ID" value="XM_059883460.1"/>
</dbReference>
<dbReference type="SMR" id="Q3SX46"/>
<dbReference type="FunCoup" id="Q3SX46">
    <property type="interactions" value="328"/>
</dbReference>
<dbReference type="STRING" id="9913.ENSBTAP00000028542"/>
<dbReference type="CAZy" id="GT31">
    <property type="family name" value="Glycosyltransferase Family 31"/>
</dbReference>
<dbReference type="PaxDb" id="9913-ENSBTAP00000028542"/>
<dbReference type="Ensembl" id="ENSBTAT00000028542.6">
    <property type="protein sequence ID" value="ENSBTAP00000028542.4"/>
    <property type="gene ID" value="ENSBTAG00000021410.6"/>
</dbReference>
<dbReference type="Ensembl" id="ENSBTAT00000115298.1">
    <property type="protein sequence ID" value="ENSBTAP00000096222.1"/>
    <property type="gene ID" value="ENSBTAG00000021410.6"/>
</dbReference>
<dbReference type="Ensembl" id="ENSBTAT00000133572.1">
    <property type="protein sequence ID" value="ENSBTAP00000080979.1"/>
    <property type="gene ID" value="ENSBTAG00000021410.6"/>
</dbReference>
<dbReference type="GeneID" id="531644"/>
<dbReference type="KEGG" id="bta:531644"/>
<dbReference type="CTD" id="29071"/>
<dbReference type="VEuPathDB" id="HostDB:ENSBTAG00000021410"/>
<dbReference type="eggNOG" id="KOG2246">
    <property type="taxonomic scope" value="Eukaryota"/>
</dbReference>
<dbReference type="GeneTree" id="ENSGT00940000155145"/>
<dbReference type="HOGENOM" id="CLU_874237_0_0_1"/>
<dbReference type="InParanoid" id="Q3SX46"/>
<dbReference type="OMA" id="WVMMRKA"/>
<dbReference type="OrthoDB" id="414175at2759"/>
<dbReference type="TreeFam" id="TF317293"/>
<dbReference type="Reactome" id="R-BTA-913709">
    <property type="pathway name" value="O-linked glycosylation of mucins"/>
</dbReference>
<dbReference type="Proteomes" id="UP000009136">
    <property type="component" value="Chromosome X"/>
</dbReference>
<dbReference type="Bgee" id="ENSBTAG00000021410">
    <property type="expression patterns" value="Expressed in caput epididymis and 105 other cell types or tissues"/>
</dbReference>
<dbReference type="GO" id="GO:0016020">
    <property type="term" value="C:membrane"/>
    <property type="evidence" value="ECO:0007669"/>
    <property type="project" value="UniProtKB-SubCell"/>
</dbReference>
<dbReference type="GO" id="GO:0016263">
    <property type="term" value="F:glycoprotein-N-acetylgalactosamine 3-beta-galactosyltransferase activity"/>
    <property type="evidence" value="ECO:0000318"/>
    <property type="project" value="GO_Central"/>
</dbReference>
<dbReference type="GO" id="GO:0006493">
    <property type="term" value="P:protein O-linked glycosylation"/>
    <property type="evidence" value="ECO:0000250"/>
    <property type="project" value="UniProtKB"/>
</dbReference>
<dbReference type="FunFam" id="3.90.550.50:FF:000016">
    <property type="entry name" value="C1GALT1-specific chaperone 1"/>
    <property type="match status" value="1"/>
</dbReference>
<dbReference type="Gene3D" id="3.90.550.50">
    <property type="match status" value="1"/>
</dbReference>
<dbReference type="InterPro" id="IPR026050">
    <property type="entry name" value="C1GALT1/C1GALT1_chp1"/>
</dbReference>
<dbReference type="PANTHER" id="PTHR23033">
    <property type="entry name" value="BETA1,3-GALACTOSYLTRANSFERASE"/>
    <property type="match status" value="1"/>
</dbReference>
<dbReference type="PANTHER" id="PTHR23033:SF2">
    <property type="entry name" value="C1GALT1-SPECIFIC CHAPERONE 1"/>
    <property type="match status" value="1"/>
</dbReference>
<name>C1GLC_BOVIN</name>
<comment type="function">
    <text evidence="1">Probable chaperone required for the generation of 1 O-glycan Gal-beta1-3GalNAc-alpha1-Ser/Thr (T antigen), which is a precursor for many extended O-glycans in glycoproteins. Probably acts as a specific molecular chaperone assisting the folding/stability of core 1 beta-3-galactosyltransferase (C1GALT1) (By similarity).</text>
</comment>
<comment type="subunit">
    <text evidence="1">Associates with core 1 beta-3-galactosyltransferase (C1GALT1), probably not with the soluble active form.</text>
</comment>
<comment type="subcellular location">
    <subcellularLocation>
        <location evidence="3">Membrane</location>
        <topology evidence="3">Single-pass type II membrane protein</topology>
    </subcellularLocation>
</comment>
<comment type="similarity">
    <text evidence="3">Belongs to the glycosyltransferase 31 family. Beta3-Gal-T subfamily.</text>
</comment>
<sequence>MLSESSSFLKGVMLGSIFCALITMLGHIRIGHGSRMHHHEHHHLQAPNKEDILKISEDERMELSKSFRVYCILLVRPKDVSLWAAVKETWTNHCDKVDFFSSENVKVFESINMETNDMWLMMRKAYKYAFDKYRDQYNWFFLARPTTFAIIENLKYFLLKKDPSQPFYLGHTVKSGDLEYVSMEGGIVLSIESMKRLNSLLSIPEKCPEQGGMIWKISEDKQLAVCLKYAGVFAENAEDSEGKDIFNTKSVGLFIKEAMTNHPNQVVEGCCSDMAVTFNGLTPNQMHVMMYGVYRLRAFGHVFNDALVFLPPNGSDND</sequence>